<sequence length="136" mass="15194">MLQPKRTKFRKMHKGRNRGLAAGADVSFGSFGLKAVGRGRLTARQIEAARRAMTRAVKRQGKIWIRVFPDKPITEKPLAVRMGKGKGNVEYWVALIQPGKVLYEMDGVPEELAREAFKLAAAKLPIKTTFVTKTVM</sequence>
<organism>
    <name type="scientific">Salmonella arizonae (strain ATCC BAA-731 / CDC346-86 / RSK2980)</name>
    <dbReference type="NCBI Taxonomy" id="41514"/>
    <lineage>
        <taxon>Bacteria</taxon>
        <taxon>Pseudomonadati</taxon>
        <taxon>Pseudomonadota</taxon>
        <taxon>Gammaproteobacteria</taxon>
        <taxon>Enterobacterales</taxon>
        <taxon>Enterobacteriaceae</taxon>
        <taxon>Salmonella</taxon>
    </lineage>
</organism>
<name>RL16_SALAR</name>
<comment type="function">
    <text evidence="1">Binds 23S rRNA and is also seen to make contacts with the A and possibly P site tRNAs.</text>
</comment>
<comment type="subunit">
    <text evidence="1">Part of the 50S ribosomal subunit.</text>
</comment>
<comment type="similarity">
    <text evidence="1">Belongs to the universal ribosomal protein uL16 family.</text>
</comment>
<protein>
    <recommendedName>
        <fullName evidence="1">Large ribosomal subunit protein uL16</fullName>
    </recommendedName>
    <alternativeName>
        <fullName evidence="2">50S ribosomal protein L16</fullName>
    </alternativeName>
</protein>
<dbReference type="EMBL" id="CP000880">
    <property type="protein sequence ID" value="ABX23985.1"/>
    <property type="molecule type" value="Genomic_DNA"/>
</dbReference>
<dbReference type="SMR" id="A9MN55"/>
<dbReference type="STRING" id="41514.SARI_04196"/>
<dbReference type="KEGG" id="ses:SARI_04196"/>
<dbReference type="HOGENOM" id="CLU_078858_2_1_6"/>
<dbReference type="Proteomes" id="UP000002084">
    <property type="component" value="Chromosome"/>
</dbReference>
<dbReference type="GO" id="GO:0022625">
    <property type="term" value="C:cytosolic large ribosomal subunit"/>
    <property type="evidence" value="ECO:0007669"/>
    <property type="project" value="TreeGrafter"/>
</dbReference>
<dbReference type="GO" id="GO:0019843">
    <property type="term" value="F:rRNA binding"/>
    <property type="evidence" value="ECO:0007669"/>
    <property type="project" value="UniProtKB-UniRule"/>
</dbReference>
<dbReference type="GO" id="GO:0003735">
    <property type="term" value="F:structural constituent of ribosome"/>
    <property type="evidence" value="ECO:0007669"/>
    <property type="project" value="InterPro"/>
</dbReference>
<dbReference type="GO" id="GO:0000049">
    <property type="term" value="F:tRNA binding"/>
    <property type="evidence" value="ECO:0007669"/>
    <property type="project" value="UniProtKB-KW"/>
</dbReference>
<dbReference type="GO" id="GO:0006412">
    <property type="term" value="P:translation"/>
    <property type="evidence" value="ECO:0007669"/>
    <property type="project" value="UniProtKB-UniRule"/>
</dbReference>
<dbReference type="CDD" id="cd01433">
    <property type="entry name" value="Ribosomal_L16_L10e"/>
    <property type="match status" value="1"/>
</dbReference>
<dbReference type="FunFam" id="3.90.1170.10:FF:000001">
    <property type="entry name" value="50S ribosomal protein L16"/>
    <property type="match status" value="1"/>
</dbReference>
<dbReference type="Gene3D" id="3.90.1170.10">
    <property type="entry name" value="Ribosomal protein L10e/L16"/>
    <property type="match status" value="1"/>
</dbReference>
<dbReference type="HAMAP" id="MF_01342">
    <property type="entry name" value="Ribosomal_uL16"/>
    <property type="match status" value="1"/>
</dbReference>
<dbReference type="InterPro" id="IPR047873">
    <property type="entry name" value="Ribosomal_uL16"/>
</dbReference>
<dbReference type="InterPro" id="IPR000114">
    <property type="entry name" value="Ribosomal_uL16_bact-type"/>
</dbReference>
<dbReference type="InterPro" id="IPR020798">
    <property type="entry name" value="Ribosomal_uL16_CS"/>
</dbReference>
<dbReference type="InterPro" id="IPR016180">
    <property type="entry name" value="Ribosomal_uL16_dom"/>
</dbReference>
<dbReference type="InterPro" id="IPR036920">
    <property type="entry name" value="Ribosomal_uL16_sf"/>
</dbReference>
<dbReference type="NCBIfam" id="TIGR01164">
    <property type="entry name" value="rplP_bact"/>
    <property type="match status" value="1"/>
</dbReference>
<dbReference type="PANTHER" id="PTHR12220">
    <property type="entry name" value="50S/60S RIBOSOMAL PROTEIN L16"/>
    <property type="match status" value="1"/>
</dbReference>
<dbReference type="PANTHER" id="PTHR12220:SF13">
    <property type="entry name" value="LARGE RIBOSOMAL SUBUNIT PROTEIN UL16M"/>
    <property type="match status" value="1"/>
</dbReference>
<dbReference type="Pfam" id="PF00252">
    <property type="entry name" value="Ribosomal_L16"/>
    <property type="match status" value="1"/>
</dbReference>
<dbReference type="PRINTS" id="PR00060">
    <property type="entry name" value="RIBOSOMALL16"/>
</dbReference>
<dbReference type="SUPFAM" id="SSF54686">
    <property type="entry name" value="Ribosomal protein L16p/L10e"/>
    <property type="match status" value="1"/>
</dbReference>
<dbReference type="PROSITE" id="PS00586">
    <property type="entry name" value="RIBOSOMAL_L16_1"/>
    <property type="match status" value="1"/>
</dbReference>
<dbReference type="PROSITE" id="PS00701">
    <property type="entry name" value="RIBOSOMAL_L16_2"/>
    <property type="match status" value="1"/>
</dbReference>
<accession>A9MN55</accession>
<evidence type="ECO:0000255" key="1">
    <source>
        <dbReference type="HAMAP-Rule" id="MF_01342"/>
    </source>
</evidence>
<evidence type="ECO:0000305" key="2"/>
<feature type="chain" id="PRO_1000086774" description="Large ribosomal subunit protein uL16">
    <location>
        <begin position="1"/>
        <end position="136"/>
    </location>
</feature>
<proteinExistence type="inferred from homology"/>
<gene>
    <name evidence="1" type="primary">rplP</name>
    <name type="ordered locus">SARI_04196</name>
</gene>
<reference key="1">
    <citation type="submission" date="2007-11" db="EMBL/GenBank/DDBJ databases">
        <authorList>
            <consortium name="The Salmonella enterica serovar Arizonae Genome Sequencing Project"/>
            <person name="McClelland M."/>
            <person name="Sanderson E.K."/>
            <person name="Porwollik S."/>
            <person name="Spieth J."/>
            <person name="Clifton W.S."/>
            <person name="Fulton R."/>
            <person name="Chunyan W."/>
            <person name="Wollam A."/>
            <person name="Shah N."/>
            <person name="Pepin K."/>
            <person name="Bhonagiri V."/>
            <person name="Nash W."/>
            <person name="Johnson M."/>
            <person name="Thiruvilangam P."/>
            <person name="Wilson R."/>
        </authorList>
    </citation>
    <scope>NUCLEOTIDE SEQUENCE [LARGE SCALE GENOMIC DNA]</scope>
    <source>
        <strain>ATCC BAA-731 / CDC346-86 / RSK2980</strain>
    </source>
</reference>
<keyword id="KW-1185">Reference proteome</keyword>
<keyword id="KW-0687">Ribonucleoprotein</keyword>
<keyword id="KW-0689">Ribosomal protein</keyword>
<keyword id="KW-0694">RNA-binding</keyword>
<keyword id="KW-0699">rRNA-binding</keyword>
<keyword id="KW-0820">tRNA-binding</keyword>